<dbReference type="EMBL" id="CP000440">
    <property type="protein sequence ID" value="ABI86505.1"/>
    <property type="status" value="ALT_INIT"/>
    <property type="molecule type" value="Genomic_DNA"/>
</dbReference>
<dbReference type="RefSeq" id="WP_041491122.1">
    <property type="nucleotide sequence ID" value="NC_008390.1"/>
</dbReference>
<dbReference type="SMR" id="Q0BH68"/>
<dbReference type="GeneID" id="93083645"/>
<dbReference type="KEGG" id="bam:Bamb_0946"/>
<dbReference type="PATRIC" id="fig|339670.21.peg.628"/>
<dbReference type="eggNOG" id="COG0806">
    <property type="taxonomic scope" value="Bacteria"/>
</dbReference>
<dbReference type="Proteomes" id="UP000000662">
    <property type="component" value="Chromosome 1"/>
</dbReference>
<dbReference type="GO" id="GO:0005737">
    <property type="term" value="C:cytoplasm"/>
    <property type="evidence" value="ECO:0007669"/>
    <property type="project" value="UniProtKB-SubCell"/>
</dbReference>
<dbReference type="GO" id="GO:0005840">
    <property type="term" value="C:ribosome"/>
    <property type="evidence" value="ECO:0007669"/>
    <property type="project" value="InterPro"/>
</dbReference>
<dbReference type="GO" id="GO:0043022">
    <property type="term" value="F:ribosome binding"/>
    <property type="evidence" value="ECO:0007669"/>
    <property type="project" value="InterPro"/>
</dbReference>
<dbReference type="GO" id="GO:0042274">
    <property type="term" value="P:ribosomal small subunit biogenesis"/>
    <property type="evidence" value="ECO:0007669"/>
    <property type="project" value="UniProtKB-UniRule"/>
</dbReference>
<dbReference type="GO" id="GO:0006364">
    <property type="term" value="P:rRNA processing"/>
    <property type="evidence" value="ECO:0007669"/>
    <property type="project" value="UniProtKB-UniRule"/>
</dbReference>
<dbReference type="Gene3D" id="2.30.30.240">
    <property type="entry name" value="PRC-barrel domain"/>
    <property type="match status" value="1"/>
</dbReference>
<dbReference type="Gene3D" id="2.40.30.60">
    <property type="entry name" value="RimM"/>
    <property type="match status" value="1"/>
</dbReference>
<dbReference type="HAMAP" id="MF_00014">
    <property type="entry name" value="Ribosome_mat_RimM"/>
    <property type="match status" value="1"/>
</dbReference>
<dbReference type="InterPro" id="IPR011033">
    <property type="entry name" value="PRC_barrel-like_sf"/>
</dbReference>
<dbReference type="InterPro" id="IPR056792">
    <property type="entry name" value="PRC_RimM"/>
</dbReference>
<dbReference type="InterPro" id="IPR011961">
    <property type="entry name" value="RimM"/>
</dbReference>
<dbReference type="InterPro" id="IPR002676">
    <property type="entry name" value="RimM_N"/>
</dbReference>
<dbReference type="InterPro" id="IPR036976">
    <property type="entry name" value="RimM_N_sf"/>
</dbReference>
<dbReference type="InterPro" id="IPR009000">
    <property type="entry name" value="Transl_B-barrel_sf"/>
</dbReference>
<dbReference type="NCBIfam" id="TIGR02273">
    <property type="entry name" value="16S_RimM"/>
    <property type="match status" value="1"/>
</dbReference>
<dbReference type="PANTHER" id="PTHR33692">
    <property type="entry name" value="RIBOSOME MATURATION FACTOR RIMM"/>
    <property type="match status" value="1"/>
</dbReference>
<dbReference type="PANTHER" id="PTHR33692:SF1">
    <property type="entry name" value="RIBOSOME MATURATION FACTOR RIMM"/>
    <property type="match status" value="1"/>
</dbReference>
<dbReference type="Pfam" id="PF24986">
    <property type="entry name" value="PRC_RimM"/>
    <property type="match status" value="1"/>
</dbReference>
<dbReference type="Pfam" id="PF01782">
    <property type="entry name" value="RimM"/>
    <property type="match status" value="1"/>
</dbReference>
<dbReference type="SUPFAM" id="SSF50346">
    <property type="entry name" value="PRC-barrel domain"/>
    <property type="match status" value="1"/>
</dbReference>
<dbReference type="SUPFAM" id="SSF50447">
    <property type="entry name" value="Translation proteins"/>
    <property type="match status" value="1"/>
</dbReference>
<protein>
    <recommendedName>
        <fullName evidence="1">Ribosome maturation factor RimM</fullName>
    </recommendedName>
</protein>
<sequence length="226" mass="24376">MSGHDSGNAKRGRASFGAFVRKPVERDVVASAGEAAEQGSLEAVQAWPDDAVEVGAVVDAYGLKGWIKVATHADAGRGGDALLDARRWWLERGGERLSARILQSKTHGDTVVAHAAGVSDRDAALALRGFRVFVRREDFPALAADEFYWVDLIGLEVVNEQSVALGTVSGMIDNGVHSIMRVEYPAVGKDGQPTTDERLIPFVGVYVKTVDQAARRIVVDWEADYS</sequence>
<reference key="1">
    <citation type="submission" date="2006-08" db="EMBL/GenBank/DDBJ databases">
        <title>Complete sequence of chromosome 1 of Burkholderia cepacia AMMD.</title>
        <authorList>
            <person name="Copeland A."/>
            <person name="Lucas S."/>
            <person name="Lapidus A."/>
            <person name="Barry K."/>
            <person name="Detter J.C."/>
            <person name="Glavina del Rio T."/>
            <person name="Hammon N."/>
            <person name="Israni S."/>
            <person name="Pitluck S."/>
            <person name="Bruce D."/>
            <person name="Chain P."/>
            <person name="Malfatti S."/>
            <person name="Shin M."/>
            <person name="Vergez L."/>
            <person name="Schmutz J."/>
            <person name="Larimer F."/>
            <person name="Land M."/>
            <person name="Hauser L."/>
            <person name="Kyrpides N."/>
            <person name="Kim E."/>
            <person name="Parke J."/>
            <person name="Coenye T."/>
            <person name="Konstantinidis K."/>
            <person name="Ramette A."/>
            <person name="Tiedje J."/>
            <person name="Richardson P."/>
        </authorList>
    </citation>
    <scope>NUCLEOTIDE SEQUENCE [LARGE SCALE GENOMIC DNA]</scope>
    <source>
        <strain>ATCC BAA-244 / DSM 16087 / CCUG 44356 / LMG 19182 / AMMD</strain>
    </source>
</reference>
<gene>
    <name evidence="1" type="primary">rimM</name>
    <name type="ordered locus">Bamb_0946</name>
</gene>
<keyword id="KW-0143">Chaperone</keyword>
<keyword id="KW-0963">Cytoplasm</keyword>
<keyword id="KW-0690">Ribosome biogenesis</keyword>
<keyword id="KW-0698">rRNA processing</keyword>
<feature type="chain" id="PRO_0000351727" description="Ribosome maturation factor RimM">
    <location>
        <begin position="1"/>
        <end position="226"/>
    </location>
</feature>
<feature type="domain" description="PRC barrel" evidence="1">
    <location>
        <begin position="144"/>
        <end position="225"/>
    </location>
</feature>
<comment type="function">
    <text evidence="1">An accessory protein needed during the final step in the assembly of 30S ribosomal subunit, possibly for assembly of the head region. Essential for efficient processing of 16S rRNA. May be needed both before and after RbfA during the maturation of 16S rRNA. It has affinity for free ribosomal 30S subunits but not for 70S ribosomes.</text>
</comment>
<comment type="subunit">
    <text evidence="1">Binds ribosomal protein uS19.</text>
</comment>
<comment type="subcellular location">
    <subcellularLocation>
        <location evidence="1">Cytoplasm</location>
    </subcellularLocation>
</comment>
<comment type="domain">
    <text evidence="1">The PRC barrel domain binds ribosomal protein uS19.</text>
</comment>
<comment type="similarity">
    <text evidence="1">Belongs to the RimM family.</text>
</comment>
<comment type="sequence caution" evidence="2">
    <conflict type="erroneous initiation">
        <sequence resource="EMBL-CDS" id="ABI86505"/>
    </conflict>
</comment>
<accession>Q0BH68</accession>
<name>RIMM_BURCM</name>
<organism>
    <name type="scientific">Burkholderia ambifaria (strain ATCC BAA-244 / DSM 16087 / CCUG 44356 / LMG 19182 / AMMD)</name>
    <name type="common">Burkholderia cepacia (strain AMMD)</name>
    <dbReference type="NCBI Taxonomy" id="339670"/>
    <lineage>
        <taxon>Bacteria</taxon>
        <taxon>Pseudomonadati</taxon>
        <taxon>Pseudomonadota</taxon>
        <taxon>Betaproteobacteria</taxon>
        <taxon>Burkholderiales</taxon>
        <taxon>Burkholderiaceae</taxon>
        <taxon>Burkholderia</taxon>
        <taxon>Burkholderia cepacia complex</taxon>
    </lineage>
</organism>
<proteinExistence type="inferred from homology"/>
<evidence type="ECO:0000255" key="1">
    <source>
        <dbReference type="HAMAP-Rule" id="MF_00014"/>
    </source>
</evidence>
<evidence type="ECO:0000305" key="2"/>